<reference key="1">
    <citation type="journal article" date="2006" name="BMC Evol. Biol.">
        <title>Complete plastid genome sequences of Drimys, Liriodendron, and Piper: implications for the phylogenetic relationships of magnoliids.</title>
        <authorList>
            <person name="Cai Z."/>
            <person name="Penaflor C."/>
            <person name="Kuehl J.V."/>
            <person name="Leebens-Mack J."/>
            <person name="Carlson J.E."/>
            <person name="dePamphilis C.W."/>
            <person name="Boore J.L."/>
            <person name="Jansen R.K."/>
        </authorList>
    </citation>
    <scope>NUCLEOTIDE SEQUENCE [LARGE SCALE GENOMIC DNA]</scope>
</reference>
<evidence type="ECO:0000250" key="1"/>
<evidence type="ECO:0000255" key="2"/>
<evidence type="ECO:0000305" key="3"/>
<keyword id="KW-0150">Chloroplast</keyword>
<keyword id="KW-0472">Membrane</keyword>
<keyword id="KW-0520">NAD</keyword>
<keyword id="KW-0521">NADP</keyword>
<keyword id="KW-0934">Plastid</keyword>
<keyword id="KW-0618">Plastoquinone</keyword>
<keyword id="KW-0874">Quinone</keyword>
<keyword id="KW-0793">Thylakoid</keyword>
<keyword id="KW-1278">Translocase</keyword>
<keyword id="KW-0812">Transmembrane</keyword>
<keyword id="KW-1133">Transmembrane helix</keyword>
<keyword id="KW-0813">Transport</keyword>
<organism>
    <name type="scientific">Drimys granadensis</name>
    <dbReference type="NCBI Taxonomy" id="224735"/>
    <lineage>
        <taxon>Eukaryota</taxon>
        <taxon>Viridiplantae</taxon>
        <taxon>Streptophyta</taxon>
        <taxon>Embryophyta</taxon>
        <taxon>Tracheophyta</taxon>
        <taxon>Spermatophyta</taxon>
        <taxon>Magnoliopsida</taxon>
        <taxon>Magnoliidae</taxon>
        <taxon>Canellales</taxon>
        <taxon>Winteraceae</taxon>
        <taxon>Drimys</taxon>
    </lineage>
</organism>
<name>NU6C_DRIGR</name>
<dbReference type="EC" id="7.1.1.-"/>
<dbReference type="EMBL" id="DQ887676">
    <property type="protein sequence ID" value="ABH88351.1"/>
    <property type="molecule type" value="Genomic_DNA"/>
</dbReference>
<dbReference type="RefSeq" id="YP_784440.1">
    <property type="nucleotide sequence ID" value="NC_008456.1"/>
</dbReference>
<dbReference type="SMR" id="Q06GU3"/>
<dbReference type="GeneID" id="4363561"/>
<dbReference type="GO" id="GO:0009535">
    <property type="term" value="C:chloroplast thylakoid membrane"/>
    <property type="evidence" value="ECO:0007669"/>
    <property type="project" value="UniProtKB-SubCell"/>
</dbReference>
<dbReference type="GO" id="GO:0008137">
    <property type="term" value="F:NADH dehydrogenase (ubiquinone) activity"/>
    <property type="evidence" value="ECO:0007669"/>
    <property type="project" value="InterPro"/>
</dbReference>
<dbReference type="GO" id="GO:0048038">
    <property type="term" value="F:quinone binding"/>
    <property type="evidence" value="ECO:0007669"/>
    <property type="project" value="UniProtKB-KW"/>
</dbReference>
<dbReference type="FunFam" id="1.20.120.1200:FF:000002">
    <property type="entry name" value="NAD(P)H-quinone oxidoreductase subunit 6, chloroplastic"/>
    <property type="match status" value="1"/>
</dbReference>
<dbReference type="Gene3D" id="1.20.120.1200">
    <property type="entry name" value="NADH-ubiquinone/plastoquinone oxidoreductase chain 6, subunit NuoJ"/>
    <property type="match status" value="1"/>
</dbReference>
<dbReference type="InterPro" id="IPR050290">
    <property type="entry name" value="NAD(P)H-Q_Oxidoreduct_6"/>
</dbReference>
<dbReference type="InterPro" id="IPR001457">
    <property type="entry name" value="NADH_UbQ/plastoQ_OxRdtase_su6"/>
</dbReference>
<dbReference type="InterPro" id="IPR042106">
    <property type="entry name" value="Nuo/plastoQ_OxRdtase_6_NuoJ"/>
</dbReference>
<dbReference type="PANTHER" id="PTHR48479">
    <property type="entry name" value="NAD(P)H-QUINONE OXIDOREDUCTASE SUBUNIT 6, CHLOROPLASTIC"/>
    <property type="match status" value="1"/>
</dbReference>
<dbReference type="PANTHER" id="PTHR48479:SF1">
    <property type="entry name" value="NAD(P)H-QUINONE OXIDOREDUCTASE SUBUNIT 6, CHLOROPLASTIC"/>
    <property type="match status" value="1"/>
</dbReference>
<dbReference type="Pfam" id="PF00499">
    <property type="entry name" value="Oxidored_q3"/>
    <property type="match status" value="1"/>
</dbReference>
<geneLocation type="chloroplast"/>
<protein>
    <recommendedName>
        <fullName>NAD(P)H-quinone oxidoreductase subunit 6, chloroplastic</fullName>
        <ecNumber>7.1.1.-</ecNumber>
    </recommendedName>
    <alternativeName>
        <fullName>NAD(P)H dehydrogenase subunit 6</fullName>
    </alternativeName>
    <alternativeName>
        <fullName>NADH-plastoquinone oxidoreductase subunit 6</fullName>
    </alternativeName>
</protein>
<accession>Q06GU3</accession>
<proteinExistence type="inferred from homology"/>
<gene>
    <name type="primary">ndhG</name>
</gene>
<feature type="chain" id="PRO_0000360251" description="NAD(P)H-quinone oxidoreductase subunit 6, chloroplastic">
    <location>
        <begin position="1"/>
        <end position="176"/>
    </location>
</feature>
<feature type="transmembrane region" description="Helical" evidence="2">
    <location>
        <begin position="10"/>
        <end position="30"/>
    </location>
</feature>
<feature type="transmembrane region" description="Helical" evidence="2">
    <location>
        <begin position="32"/>
        <end position="52"/>
    </location>
</feature>
<feature type="transmembrane region" description="Helical" evidence="2">
    <location>
        <begin position="61"/>
        <end position="81"/>
    </location>
</feature>
<feature type="transmembrane region" description="Helical" evidence="2">
    <location>
        <begin position="92"/>
        <end position="112"/>
    </location>
</feature>
<feature type="transmembrane region" description="Helical" evidence="2">
    <location>
        <begin position="152"/>
        <end position="172"/>
    </location>
</feature>
<comment type="function">
    <text evidence="1">NDH shuttles electrons from NAD(P)H:plastoquinone, via FMN and iron-sulfur (Fe-S) centers, to quinones in the photosynthetic chain and possibly in a chloroplast respiratory chain. The immediate electron acceptor for the enzyme in this species is believed to be plastoquinone. Couples the redox reaction to proton translocation, and thus conserves the redox energy in a proton gradient (By similarity).</text>
</comment>
<comment type="catalytic activity">
    <reaction>
        <text>a plastoquinone + NADH + (n+1) H(+)(in) = a plastoquinol + NAD(+) + n H(+)(out)</text>
        <dbReference type="Rhea" id="RHEA:42608"/>
        <dbReference type="Rhea" id="RHEA-COMP:9561"/>
        <dbReference type="Rhea" id="RHEA-COMP:9562"/>
        <dbReference type="ChEBI" id="CHEBI:15378"/>
        <dbReference type="ChEBI" id="CHEBI:17757"/>
        <dbReference type="ChEBI" id="CHEBI:57540"/>
        <dbReference type="ChEBI" id="CHEBI:57945"/>
        <dbReference type="ChEBI" id="CHEBI:62192"/>
    </reaction>
</comment>
<comment type="catalytic activity">
    <reaction>
        <text>a plastoquinone + NADPH + (n+1) H(+)(in) = a plastoquinol + NADP(+) + n H(+)(out)</text>
        <dbReference type="Rhea" id="RHEA:42612"/>
        <dbReference type="Rhea" id="RHEA-COMP:9561"/>
        <dbReference type="Rhea" id="RHEA-COMP:9562"/>
        <dbReference type="ChEBI" id="CHEBI:15378"/>
        <dbReference type="ChEBI" id="CHEBI:17757"/>
        <dbReference type="ChEBI" id="CHEBI:57783"/>
        <dbReference type="ChEBI" id="CHEBI:58349"/>
        <dbReference type="ChEBI" id="CHEBI:62192"/>
    </reaction>
</comment>
<comment type="subunit">
    <text evidence="1">NDH is composed of at least 16 different subunits, 5 of which are encoded in the nucleus.</text>
</comment>
<comment type="subcellular location">
    <subcellularLocation>
        <location evidence="1">Plastid</location>
        <location evidence="1">Chloroplast thylakoid membrane</location>
        <topology evidence="1">Multi-pass membrane protein</topology>
    </subcellularLocation>
</comment>
<comment type="similarity">
    <text evidence="3">Belongs to the complex I subunit 6 family.</text>
</comment>
<sequence length="176" mass="19162">MDLPGPIHDILLVFLGSGLILGGLGVVLFTNPIFSAFSLGLVLVCISLFHILSNSYFVAAAQLLIYVGAVNVLIIFAVMFMNGSEYYNDFYLWTVGDGVTSLVCTSILFSLITTISDTSWYGIIWTTGSNQIIEQDLISNVQQIGIHLSTDFYLPFELISIILLVALIGAIAMARQ</sequence>